<comment type="function">
    <text evidence="1">Acts as a component of the essential kinetochore-associated NDC80 complex, which is required for chromosome segregation and spindle checkpoint activity.</text>
</comment>
<comment type="subunit">
    <text evidence="1">Component of the NDC80 complex, which consists of NDC80, NUF2, SPC24 and SPC25.</text>
</comment>
<comment type="subcellular location">
    <subcellularLocation>
        <location evidence="1">Nucleus</location>
    </subcellularLocation>
    <subcellularLocation>
        <location evidence="1">Chromosome</location>
        <location evidence="1">Centromere</location>
        <location evidence="1">Kinetochore</location>
    </subcellularLocation>
    <text evidence="1">Associated with kinetochores.</text>
</comment>
<comment type="similarity">
    <text evidence="4">Belongs to the NDC80/HEC1 family.</text>
</comment>
<evidence type="ECO:0000250" key="1"/>
<evidence type="ECO:0000255" key="2"/>
<evidence type="ECO:0000256" key="3">
    <source>
        <dbReference type="SAM" id="MobiDB-lite"/>
    </source>
</evidence>
<evidence type="ECO:0000305" key="4"/>
<proteinExistence type="inferred from homology"/>
<dbReference type="EMBL" id="DS231668">
    <property type="protein sequence ID" value="ESU15810.1"/>
    <property type="molecule type" value="Genomic_DNA"/>
</dbReference>
<dbReference type="EMBL" id="HG970335">
    <property type="protein sequence ID" value="CEF83728.1"/>
    <property type="molecule type" value="Genomic_DNA"/>
</dbReference>
<dbReference type="RefSeq" id="XP_011328506.1">
    <property type="nucleotide sequence ID" value="XM_011330204.1"/>
</dbReference>
<dbReference type="SMR" id="Q4I0J6"/>
<dbReference type="FunCoup" id="Q4I0J6">
    <property type="interactions" value="273"/>
</dbReference>
<dbReference type="STRING" id="229533.Q4I0J6"/>
<dbReference type="GeneID" id="23556224"/>
<dbReference type="KEGG" id="fgr:FGSG_09262"/>
<dbReference type="VEuPathDB" id="FungiDB:FGRAMPH1_01G27527"/>
<dbReference type="eggNOG" id="KOG0995">
    <property type="taxonomic scope" value="Eukaryota"/>
</dbReference>
<dbReference type="HOGENOM" id="CLU_012583_0_0_1"/>
<dbReference type="InParanoid" id="Q4I0J6"/>
<dbReference type="OrthoDB" id="102687at110618"/>
<dbReference type="Proteomes" id="UP000070720">
    <property type="component" value="Chromosome 4"/>
</dbReference>
<dbReference type="GO" id="GO:0031262">
    <property type="term" value="C:Ndc80 complex"/>
    <property type="evidence" value="ECO:0000250"/>
    <property type="project" value="UniProtKB"/>
</dbReference>
<dbReference type="GO" id="GO:0005634">
    <property type="term" value="C:nucleus"/>
    <property type="evidence" value="ECO:0007669"/>
    <property type="project" value="UniProtKB-SubCell"/>
</dbReference>
<dbReference type="GO" id="GO:0008017">
    <property type="term" value="F:microtubule binding"/>
    <property type="evidence" value="ECO:0000250"/>
    <property type="project" value="UniProtKB"/>
</dbReference>
<dbReference type="GO" id="GO:0051301">
    <property type="term" value="P:cell division"/>
    <property type="evidence" value="ECO:0007669"/>
    <property type="project" value="UniProtKB-KW"/>
</dbReference>
<dbReference type="GO" id="GO:1990758">
    <property type="term" value="P:mitotic sister chromatid biorientation"/>
    <property type="evidence" value="ECO:0000250"/>
    <property type="project" value="UniProtKB"/>
</dbReference>
<dbReference type="FunFam" id="1.10.418.30:FF:000001">
    <property type="entry name" value="Probable kinetochore protein ndc80"/>
    <property type="match status" value="1"/>
</dbReference>
<dbReference type="Gene3D" id="1.10.418.30">
    <property type="entry name" value="Ncd80 complex, Ncd80 subunit"/>
    <property type="match status" value="1"/>
</dbReference>
<dbReference type="InterPro" id="IPR005550">
    <property type="entry name" value="Kinetochore_Ndc80"/>
</dbReference>
<dbReference type="InterPro" id="IPR055260">
    <property type="entry name" value="Ndc80_CH"/>
</dbReference>
<dbReference type="InterPro" id="IPR038273">
    <property type="entry name" value="Ndc80_sf"/>
</dbReference>
<dbReference type="PANTHER" id="PTHR10643">
    <property type="entry name" value="KINETOCHORE PROTEIN NDC80"/>
    <property type="match status" value="1"/>
</dbReference>
<dbReference type="PANTHER" id="PTHR10643:SF2">
    <property type="entry name" value="KINETOCHORE PROTEIN NDC80 HOMOLOG"/>
    <property type="match status" value="1"/>
</dbReference>
<dbReference type="Pfam" id="PF03801">
    <property type="entry name" value="Ndc80_HEC"/>
    <property type="match status" value="1"/>
</dbReference>
<dbReference type="Pfam" id="PF24487">
    <property type="entry name" value="NDC80_loop"/>
    <property type="match status" value="1"/>
</dbReference>
<organism>
    <name type="scientific">Gibberella zeae (strain ATCC MYA-4620 / CBS 123657 / FGSC 9075 / NRRL 31084 / PH-1)</name>
    <name type="common">Wheat head blight fungus</name>
    <name type="synonym">Fusarium graminearum</name>
    <dbReference type="NCBI Taxonomy" id="229533"/>
    <lineage>
        <taxon>Eukaryota</taxon>
        <taxon>Fungi</taxon>
        <taxon>Dikarya</taxon>
        <taxon>Ascomycota</taxon>
        <taxon>Pezizomycotina</taxon>
        <taxon>Sordariomycetes</taxon>
        <taxon>Hypocreomycetidae</taxon>
        <taxon>Hypocreales</taxon>
        <taxon>Nectriaceae</taxon>
        <taxon>Fusarium</taxon>
    </lineage>
</organism>
<gene>
    <name type="primary">NDC80</name>
    <name type="ORF">FGRRES_09262</name>
    <name type="ORF">FGSG_09262</name>
</gene>
<reference key="1">
    <citation type="journal article" date="2007" name="Science">
        <title>The Fusarium graminearum genome reveals a link between localized polymorphism and pathogen specialization.</title>
        <authorList>
            <person name="Cuomo C.A."/>
            <person name="Gueldener U."/>
            <person name="Xu J.-R."/>
            <person name="Trail F."/>
            <person name="Turgeon B.G."/>
            <person name="Di Pietro A."/>
            <person name="Walton J.D."/>
            <person name="Ma L.-J."/>
            <person name="Baker S.E."/>
            <person name="Rep M."/>
            <person name="Adam G."/>
            <person name="Antoniw J."/>
            <person name="Baldwin T."/>
            <person name="Calvo S.E."/>
            <person name="Chang Y.-L."/>
            <person name="DeCaprio D."/>
            <person name="Gale L.R."/>
            <person name="Gnerre S."/>
            <person name="Goswami R.S."/>
            <person name="Hammond-Kosack K."/>
            <person name="Harris L.J."/>
            <person name="Hilburn K."/>
            <person name="Kennell J.C."/>
            <person name="Kroken S."/>
            <person name="Magnuson J.K."/>
            <person name="Mannhaupt G."/>
            <person name="Mauceli E.W."/>
            <person name="Mewes H.-W."/>
            <person name="Mitterbauer R."/>
            <person name="Muehlbauer G."/>
            <person name="Muensterkoetter M."/>
            <person name="Nelson D."/>
            <person name="O'Donnell K."/>
            <person name="Ouellet T."/>
            <person name="Qi W."/>
            <person name="Quesneville H."/>
            <person name="Roncero M.I.G."/>
            <person name="Seong K.-Y."/>
            <person name="Tetko I.V."/>
            <person name="Urban M."/>
            <person name="Waalwijk C."/>
            <person name="Ward T.J."/>
            <person name="Yao J."/>
            <person name="Birren B.W."/>
            <person name="Kistler H.C."/>
        </authorList>
    </citation>
    <scope>NUCLEOTIDE SEQUENCE [LARGE SCALE GENOMIC DNA]</scope>
    <source>
        <strain>ATCC MYA-4620 / CBS 123657 / FGSC 9075 / NRRL 31084 / PH-1</strain>
    </source>
</reference>
<reference key="2">
    <citation type="journal article" date="2010" name="Nature">
        <title>Comparative genomics reveals mobile pathogenicity chromosomes in Fusarium.</title>
        <authorList>
            <person name="Ma L.-J."/>
            <person name="van der Does H.C."/>
            <person name="Borkovich K.A."/>
            <person name="Coleman J.J."/>
            <person name="Daboussi M.-J."/>
            <person name="Di Pietro A."/>
            <person name="Dufresne M."/>
            <person name="Freitag M."/>
            <person name="Grabherr M."/>
            <person name="Henrissat B."/>
            <person name="Houterman P.M."/>
            <person name="Kang S."/>
            <person name="Shim W.-B."/>
            <person name="Woloshuk C."/>
            <person name="Xie X."/>
            <person name="Xu J.-R."/>
            <person name="Antoniw J."/>
            <person name="Baker S.E."/>
            <person name="Bluhm B.H."/>
            <person name="Breakspear A."/>
            <person name="Brown D.W."/>
            <person name="Butchko R.A.E."/>
            <person name="Chapman S."/>
            <person name="Coulson R."/>
            <person name="Coutinho P.M."/>
            <person name="Danchin E.G.J."/>
            <person name="Diener A."/>
            <person name="Gale L.R."/>
            <person name="Gardiner D.M."/>
            <person name="Goff S."/>
            <person name="Hammond-Kosack K.E."/>
            <person name="Hilburn K."/>
            <person name="Hua-Van A."/>
            <person name="Jonkers W."/>
            <person name="Kazan K."/>
            <person name="Kodira C.D."/>
            <person name="Koehrsen M."/>
            <person name="Kumar L."/>
            <person name="Lee Y.-H."/>
            <person name="Li L."/>
            <person name="Manners J.M."/>
            <person name="Miranda-Saavedra D."/>
            <person name="Mukherjee M."/>
            <person name="Park G."/>
            <person name="Park J."/>
            <person name="Park S.-Y."/>
            <person name="Proctor R.H."/>
            <person name="Regev A."/>
            <person name="Ruiz-Roldan M.C."/>
            <person name="Sain D."/>
            <person name="Sakthikumar S."/>
            <person name="Sykes S."/>
            <person name="Schwartz D.C."/>
            <person name="Turgeon B.G."/>
            <person name="Wapinski I."/>
            <person name="Yoder O."/>
            <person name="Young S."/>
            <person name="Zeng Q."/>
            <person name="Zhou S."/>
            <person name="Galagan J."/>
            <person name="Cuomo C.A."/>
            <person name="Kistler H.C."/>
            <person name="Rep M."/>
        </authorList>
    </citation>
    <scope>GENOME REANNOTATION</scope>
    <source>
        <strain>ATCC MYA-4620 / CBS 123657 / FGSC 9075 / NRRL 31084 / PH-1</strain>
    </source>
</reference>
<reference key="3">
    <citation type="journal article" date="2015" name="BMC Genomics">
        <title>The completed genome sequence of the pathogenic ascomycete fungus Fusarium graminearum.</title>
        <authorList>
            <person name="King R."/>
            <person name="Urban M."/>
            <person name="Hammond-Kosack M.C.U."/>
            <person name="Hassani-Pak K."/>
            <person name="Hammond-Kosack K.E."/>
        </authorList>
    </citation>
    <scope>NUCLEOTIDE SEQUENCE [LARGE SCALE GENOMIC DNA]</scope>
    <source>
        <strain>ATCC MYA-4620 / CBS 123657 / FGSC 9075 / NRRL 31084 / PH-1</strain>
    </source>
</reference>
<accession>Q4I0J6</accession>
<accession>A0A0E0SBB5</accession>
<accession>V6RV41</accession>
<protein>
    <recommendedName>
        <fullName>Probable kinetochore protein NDC80</fullName>
    </recommendedName>
</protein>
<name>NDC80_GIBZE</name>
<feature type="chain" id="PRO_0000246640" description="Probable kinetochore protein NDC80">
    <location>
        <begin position="1"/>
        <end position="726"/>
    </location>
</feature>
<feature type="region of interest" description="Disordered" evidence="3">
    <location>
        <begin position="1"/>
        <end position="76"/>
    </location>
</feature>
<feature type="region of interest" description="Disordered" evidence="3">
    <location>
        <begin position="90"/>
        <end position="148"/>
    </location>
</feature>
<feature type="coiled-coil region" evidence="2">
    <location>
        <begin position="323"/>
        <end position="489"/>
    </location>
</feature>
<feature type="coiled-coil region" evidence="2">
    <location>
        <begin position="587"/>
        <end position="682"/>
    </location>
</feature>
<feature type="compositionally biased region" description="Polar residues" evidence="3">
    <location>
        <begin position="21"/>
        <end position="41"/>
    </location>
</feature>
<feature type="compositionally biased region" description="Polar residues" evidence="3">
    <location>
        <begin position="67"/>
        <end position="76"/>
    </location>
</feature>
<feature type="compositionally biased region" description="Polar residues" evidence="3">
    <location>
        <begin position="90"/>
        <end position="105"/>
    </location>
</feature>
<feature type="compositionally biased region" description="Polar residues" evidence="3">
    <location>
        <begin position="120"/>
        <end position="138"/>
    </location>
</feature>
<keyword id="KW-0131">Cell cycle</keyword>
<keyword id="KW-0132">Cell division</keyword>
<keyword id="KW-0137">Centromere</keyword>
<keyword id="KW-0158">Chromosome</keyword>
<keyword id="KW-0175">Coiled coil</keyword>
<keyword id="KW-0995">Kinetochore</keyword>
<keyword id="KW-0498">Mitosis</keyword>
<keyword id="KW-0539">Nucleus</keyword>
<keyword id="KW-1185">Reference proteome</keyword>
<sequence length="726" mass="82885">MSQDTGLWSVRRPRETLGGISANSAIPQPGSTMKRSSSNIGGNYPGSHVRSMSGSRHSLAMPRPSQPMFQRSSSGTNLVDLGLSSVKRSSFAPKSTFTPGTATKRASTDGDRRSSVYRPRQSTVPAVSHHQSFFQTTPAPAGVPRDPRPLKDRSFQARIGQEIMEYMVQHNFEMEMKHVLSQNVLKSPTQKDFNYMFQWLYHRIDPSHKFQKNIDQEVPPLLKQMRYPFERSITKSQIAAVGGQNWSTFLGLLHWMMQLAQMLDGYVNCQYDEACMEAGIDVSGDRIIFDFLSNGYRDWLAMDEDLGDEEAERVLAPHVQSMAAAFERSNSKYTSELDMLEAENARLLKEIEDLEKSTPDPAVLDHHFKIMEEDKVKFEEYNALAMQRSEKYESRSQVLQEELDKLLEELQEADEERRSLQKAVDAQGISMQDIDRMTAERERLQRGIESASQRLEEVKKKVSEREAEASRKLDELEQMVDRYNTMAYQIALIPSTAANAKGREFELQVTVADDSDFTTSIMKSGPSSADRLVVDSTTGHQAGHILNLDLRGKIRNSFISLRKEISDRRATAMDEMIKDHDLLDGIKEAIEDRRGEVEALNHRVRAAEEEYEKTKEVTTAQKLASDAHIEKMEKELSRMRAGLSENVQILEQREINTTIEYEQLVLQANALREELHTEIDRMLNDVIKFKIHVQKSLDDYEGFVTEELEKELGSDEMQEDTQRMDM</sequence>